<keyword id="KW-0012">Acyltransferase</keyword>
<keyword id="KW-0025">Alternative splicing</keyword>
<keyword id="KW-0106">Calcium</keyword>
<keyword id="KW-1003">Cell membrane</keyword>
<keyword id="KW-0256">Endoplasmic reticulum</keyword>
<keyword id="KW-0333">Golgi apparatus</keyword>
<keyword id="KW-0444">Lipid biosynthesis</keyword>
<keyword id="KW-0551">Lipid droplet</keyword>
<keyword id="KW-0443">Lipid metabolism</keyword>
<keyword id="KW-0472">Membrane</keyword>
<keyword id="KW-0479">Metal-binding</keyword>
<keyword id="KW-0594">Phospholipid biosynthesis</keyword>
<keyword id="KW-1208">Phospholipid metabolism</keyword>
<keyword id="KW-1267">Proteomics identification</keyword>
<keyword id="KW-1185">Reference proteome</keyword>
<keyword id="KW-0677">Repeat</keyword>
<keyword id="KW-0735">Signal-anchor</keyword>
<keyword id="KW-0808">Transferase</keyword>
<keyword id="KW-0812">Transmembrane</keyword>
<keyword id="KW-1133">Transmembrane helix</keyword>
<accession>Q7L5N7</accession>
<accession>A3KBM1</accession>
<accession>Q6MZJ6</accession>
<accession>Q9NX23</accession>
<reference key="1">
    <citation type="journal article" date="2007" name="J. Biol. Chem.">
        <title>A single enzyme catalyzes both platelet-activating factor production and membrane biogenesis of inflammatory cells. Cloning and characterization of acetyl-CoA:lyso-PAF acetyltransferase.</title>
        <authorList>
            <person name="Shindou H."/>
            <person name="Hishikawa D."/>
            <person name="Nakanishi H."/>
            <person name="Harayama T."/>
            <person name="Ishii S."/>
            <person name="Taguchi R."/>
            <person name="Shimizu T."/>
        </authorList>
    </citation>
    <scope>NUCLEOTIDE SEQUENCE [MRNA] (ISOFORM 1)</scope>
    <scope>FUNCTION</scope>
    <scope>CATALYTIC ACTIVITY</scope>
</reference>
<reference key="2">
    <citation type="journal article" date="2004" name="Nat. Genet.">
        <title>Complete sequencing and characterization of 21,243 full-length human cDNAs.</title>
        <authorList>
            <person name="Ota T."/>
            <person name="Suzuki Y."/>
            <person name="Nishikawa T."/>
            <person name="Otsuki T."/>
            <person name="Sugiyama T."/>
            <person name="Irie R."/>
            <person name="Wakamatsu A."/>
            <person name="Hayashi K."/>
            <person name="Sato H."/>
            <person name="Nagai K."/>
            <person name="Kimura K."/>
            <person name="Makita H."/>
            <person name="Sekine M."/>
            <person name="Obayashi M."/>
            <person name="Nishi T."/>
            <person name="Shibahara T."/>
            <person name="Tanaka T."/>
            <person name="Ishii S."/>
            <person name="Yamamoto J."/>
            <person name="Saito K."/>
            <person name="Kawai Y."/>
            <person name="Isono Y."/>
            <person name="Nakamura Y."/>
            <person name="Nagahari K."/>
            <person name="Murakami K."/>
            <person name="Yasuda T."/>
            <person name="Iwayanagi T."/>
            <person name="Wagatsuma M."/>
            <person name="Shiratori A."/>
            <person name="Sudo H."/>
            <person name="Hosoiri T."/>
            <person name="Kaku Y."/>
            <person name="Kodaira H."/>
            <person name="Kondo H."/>
            <person name="Sugawara M."/>
            <person name="Takahashi M."/>
            <person name="Kanda K."/>
            <person name="Yokoi T."/>
            <person name="Furuya T."/>
            <person name="Kikkawa E."/>
            <person name="Omura Y."/>
            <person name="Abe K."/>
            <person name="Kamihara K."/>
            <person name="Katsuta N."/>
            <person name="Sato K."/>
            <person name="Tanikawa M."/>
            <person name="Yamazaki M."/>
            <person name="Ninomiya K."/>
            <person name="Ishibashi T."/>
            <person name="Yamashita H."/>
            <person name="Murakawa K."/>
            <person name="Fujimori K."/>
            <person name="Tanai H."/>
            <person name="Kimata M."/>
            <person name="Watanabe M."/>
            <person name="Hiraoka S."/>
            <person name="Chiba Y."/>
            <person name="Ishida S."/>
            <person name="Ono Y."/>
            <person name="Takiguchi S."/>
            <person name="Watanabe S."/>
            <person name="Yosida M."/>
            <person name="Hotuta T."/>
            <person name="Kusano J."/>
            <person name="Kanehori K."/>
            <person name="Takahashi-Fujii A."/>
            <person name="Hara H."/>
            <person name="Tanase T.-O."/>
            <person name="Nomura Y."/>
            <person name="Togiya S."/>
            <person name="Komai F."/>
            <person name="Hara R."/>
            <person name="Takeuchi K."/>
            <person name="Arita M."/>
            <person name="Imose N."/>
            <person name="Musashino K."/>
            <person name="Yuuki H."/>
            <person name="Oshima A."/>
            <person name="Sasaki N."/>
            <person name="Aotsuka S."/>
            <person name="Yoshikawa Y."/>
            <person name="Matsunawa H."/>
            <person name="Ichihara T."/>
            <person name="Shiohata N."/>
            <person name="Sano S."/>
            <person name="Moriya S."/>
            <person name="Momiyama H."/>
            <person name="Satoh N."/>
            <person name="Takami S."/>
            <person name="Terashima Y."/>
            <person name="Suzuki O."/>
            <person name="Nakagawa S."/>
            <person name="Senoh A."/>
            <person name="Mizoguchi H."/>
            <person name="Goto Y."/>
            <person name="Shimizu F."/>
            <person name="Wakebe H."/>
            <person name="Hishigaki H."/>
            <person name="Watanabe T."/>
            <person name="Sugiyama A."/>
            <person name="Takemoto M."/>
            <person name="Kawakami B."/>
            <person name="Yamazaki M."/>
            <person name="Watanabe K."/>
            <person name="Kumagai A."/>
            <person name="Itakura S."/>
            <person name="Fukuzumi Y."/>
            <person name="Fujimori Y."/>
            <person name="Komiyama M."/>
            <person name="Tashiro H."/>
            <person name="Tanigami A."/>
            <person name="Fujiwara T."/>
            <person name="Ono T."/>
            <person name="Yamada K."/>
            <person name="Fujii Y."/>
            <person name="Ozaki K."/>
            <person name="Hirao M."/>
            <person name="Ohmori Y."/>
            <person name="Kawabata A."/>
            <person name="Hikiji T."/>
            <person name="Kobatake N."/>
            <person name="Inagaki H."/>
            <person name="Ikema Y."/>
            <person name="Okamoto S."/>
            <person name="Okitani R."/>
            <person name="Kawakami T."/>
            <person name="Noguchi S."/>
            <person name="Itoh T."/>
            <person name="Shigeta K."/>
            <person name="Senba T."/>
            <person name="Matsumura K."/>
            <person name="Nakajima Y."/>
            <person name="Mizuno T."/>
            <person name="Morinaga M."/>
            <person name="Sasaki M."/>
            <person name="Togashi T."/>
            <person name="Oyama M."/>
            <person name="Hata H."/>
            <person name="Watanabe M."/>
            <person name="Komatsu T."/>
            <person name="Mizushima-Sugano J."/>
            <person name="Satoh T."/>
            <person name="Shirai Y."/>
            <person name="Takahashi Y."/>
            <person name="Nakagawa K."/>
            <person name="Okumura K."/>
            <person name="Nagase T."/>
            <person name="Nomura N."/>
            <person name="Kikuchi H."/>
            <person name="Masuho Y."/>
            <person name="Yamashita R."/>
            <person name="Nakai K."/>
            <person name="Yada T."/>
            <person name="Nakamura Y."/>
            <person name="Ohara O."/>
            <person name="Isogai T."/>
            <person name="Sugano S."/>
        </authorList>
    </citation>
    <scope>NUCLEOTIDE SEQUENCE [LARGE SCALE MRNA] (ISOFORM 1)</scope>
    <source>
        <tissue>Carcinoma</tissue>
    </source>
</reference>
<reference key="3">
    <citation type="journal article" date="2007" name="BMC Genomics">
        <title>The full-ORF clone resource of the German cDNA consortium.</title>
        <authorList>
            <person name="Bechtel S."/>
            <person name="Rosenfelder H."/>
            <person name="Duda A."/>
            <person name="Schmidt C.P."/>
            <person name="Ernst U."/>
            <person name="Wellenreuther R."/>
            <person name="Mehrle A."/>
            <person name="Schuster C."/>
            <person name="Bahr A."/>
            <person name="Bloecker H."/>
            <person name="Heubner D."/>
            <person name="Hoerlein A."/>
            <person name="Michel G."/>
            <person name="Wedler H."/>
            <person name="Koehrer K."/>
            <person name="Ottenwaelder B."/>
            <person name="Poustka A."/>
            <person name="Wiemann S."/>
            <person name="Schupp I."/>
        </authorList>
    </citation>
    <scope>NUCLEOTIDE SEQUENCE [LARGE SCALE MRNA] (ISOFORM 2)</scope>
    <source>
        <tissue>Fetal kidney</tissue>
    </source>
</reference>
<reference key="4">
    <citation type="journal article" date="2004" name="Genome Res.">
        <title>The status, quality, and expansion of the NIH full-length cDNA project: the Mammalian Gene Collection (MGC).</title>
        <authorList>
            <consortium name="The MGC Project Team"/>
        </authorList>
    </citation>
    <scope>NUCLEOTIDE SEQUENCE [LARGE SCALE MRNA] (ISOFORM 1)</scope>
    <source>
        <tissue>Kidney</tissue>
    </source>
</reference>
<reference key="5">
    <citation type="journal article" date="2010" name="J. Lipid Res.">
        <title>Enzymatic activity of the human 1-acylglycerol-3-phosphate-O-acyltransferase isoform 11: upregulated in breast and cervical cancers.</title>
        <authorList>
            <person name="Agarwal A.K."/>
            <person name="Garg A."/>
        </authorList>
    </citation>
    <scope>FUNCTION</scope>
    <scope>CATALYTIC ACTIVITY</scope>
    <scope>SUBCELLULAR LOCATION</scope>
</reference>
<reference key="6">
    <citation type="journal article" date="2011" name="BMC Syst. Biol.">
        <title>Initial characterization of the human central proteome.</title>
        <authorList>
            <person name="Burkard T.R."/>
            <person name="Planyavsky M."/>
            <person name="Kaupe I."/>
            <person name="Breitwieser F.P."/>
            <person name="Buerckstuemmer T."/>
            <person name="Bennett K.L."/>
            <person name="Superti-Furga G."/>
            <person name="Colinge J."/>
        </authorList>
    </citation>
    <scope>IDENTIFICATION BY MASS SPECTROMETRY [LARGE SCALE ANALYSIS]</scope>
</reference>
<reference key="7">
    <citation type="journal article" date="2011" name="J. Biol. Chem.">
        <title>Human lysophosphatidylcholine acyltransferases 1 and 2 are located in lipid droplets where they catalyze the formation of phosphatidylcholine.</title>
        <authorList>
            <person name="Moessinger C."/>
            <person name="Kuerschner L."/>
            <person name="Spandl J."/>
            <person name="Shevchenko A."/>
            <person name="Thiele C."/>
        </authorList>
    </citation>
    <scope>FUNCTION</scope>
    <scope>CATALYTIC ACTIVITY</scope>
    <scope>SUBCELLULAR LOCATION</scope>
    <scope>TOPOLOGY</scope>
</reference>
<reference key="8">
    <citation type="journal article" date="2014" name="BMC Cell Biol.">
        <title>Two different pathways of phosphatidylcholine synthesis, the Kennedy Pathway and the Lands Cycle, differentially regulate cellular triacylglycerol storage.</title>
        <authorList>
            <person name="Moessinger C."/>
            <person name="Klizaite K."/>
            <person name="Steinhagen A."/>
            <person name="Philippou-Massier J."/>
            <person name="Shevchenko A."/>
            <person name="Hoch M."/>
            <person name="Ejsing C.S."/>
            <person name="Thiele C."/>
        </authorList>
    </citation>
    <scope>FUNCTION</scope>
</reference>
<reference key="9">
    <citation type="journal article" date="2015" name="Proteomics">
        <title>N-terminome analysis of the human mitochondrial proteome.</title>
        <authorList>
            <person name="Vaca Jacome A.S."/>
            <person name="Rabilloud T."/>
            <person name="Schaeffer-Reiss C."/>
            <person name="Rompais M."/>
            <person name="Ayoub D."/>
            <person name="Lane L."/>
            <person name="Bairoch A."/>
            <person name="Van Dorsselaer A."/>
            <person name="Carapito C."/>
        </authorList>
    </citation>
    <scope>IDENTIFICATION BY MASS SPECTROMETRY [LARGE SCALE ANALYSIS]</scope>
</reference>
<gene>
    <name type="primary">LPCAT2</name>
    <name type="synonym">AGPAT11</name>
    <name type="synonym">AYTL1</name>
</gene>
<organism>
    <name type="scientific">Homo sapiens</name>
    <name type="common">Human</name>
    <dbReference type="NCBI Taxonomy" id="9606"/>
    <lineage>
        <taxon>Eukaryota</taxon>
        <taxon>Metazoa</taxon>
        <taxon>Chordata</taxon>
        <taxon>Craniata</taxon>
        <taxon>Vertebrata</taxon>
        <taxon>Euteleostomi</taxon>
        <taxon>Mammalia</taxon>
        <taxon>Eutheria</taxon>
        <taxon>Euarchontoglires</taxon>
        <taxon>Primates</taxon>
        <taxon>Haplorrhini</taxon>
        <taxon>Catarrhini</taxon>
        <taxon>Hominidae</taxon>
        <taxon>Homo</taxon>
    </lineage>
</organism>
<comment type="function">
    <text evidence="2 6 7 8 9">Exhibits both acyltransferase and acetyltransferase activities (PubMed:17182612, PubMed:20363836, PubMed:21498505). Catalyzes the conversion of lysophosphatidylcholine (1-acyl-sn-glycero-3-phosphocholine or LPC) into phosphatidylcholine (1,2-diacyl-sn-glycero-3-phosphocholine or PC) (PubMed:21498505). Catalyzes the conversion 1-acyl-sn-glycerol-3-phosphate (lysophosphatidic acid or LPA) into 1,2-diacyl-sn-glycerol-3-phosphate (phosphatidic acid or PA) by incorporating an acyl moiety at the sn-2 position of the glycerol backbone (PubMed:20363836). Involved in platelet-activating factor (PAF) biosynthesis by catalyzing the conversion of the PAF precursor, 1-O-alkyl-sn-glycero-3-phosphocholine (lyso-PAF) into 1-O-alkyl-2-acetyl-sn-glycero-3-phosphocholine (PAF) (PubMed:17182612). Also converts lyso-PAF to 1-O-alkyl-2-acyl-sn-glycero-3-phosphocholine (PC), a major component of cell membranes and a PAF precursor (By similarity). Under resting conditions, acyltransferase activity is preferred (By similarity). Upon acute inflammatory stimulus, acetyltransferase activity is enhanced and PAF synthesis increases (By similarity). Involved in the regulation of lipid droplet number and size (PubMed:25491198).</text>
</comment>
<comment type="catalytic activity">
    <reaction evidence="8">
        <text>a 1-acyl-sn-glycero-3-phosphocholine + an acyl-CoA = a 1,2-diacyl-sn-glycero-3-phosphocholine + CoA</text>
        <dbReference type="Rhea" id="RHEA:12937"/>
        <dbReference type="ChEBI" id="CHEBI:57287"/>
        <dbReference type="ChEBI" id="CHEBI:57643"/>
        <dbReference type="ChEBI" id="CHEBI:58168"/>
        <dbReference type="ChEBI" id="CHEBI:58342"/>
        <dbReference type="EC" id="2.3.1.23"/>
    </reaction>
</comment>
<comment type="catalytic activity">
    <reaction evidence="6">
        <text>a 1-O-alkyl-sn-glycero-3-phosphocholine + acetyl-CoA = a 1-O-alkyl-2-acetyl-sn-glycero-3-phosphocholine + CoA</text>
        <dbReference type="Rhea" id="RHEA:18461"/>
        <dbReference type="ChEBI" id="CHEBI:30909"/>
        <dbReference type="ChEBI" id="CHEBI:36707"/>
        <dbReference type="ChEBI" id="CHEBI:57287"/>
        <dbReference type="ChEBI" id="CHEBI:57288"/>
        <dbReference type="EC" id="2.3.1.67"/>
    </reaction>
</comment>
<comment type="catalytic activity">
    <reaction evidence="7">
        <text>a 1-acyl-sn-glycero-3-phosphate + an acyl-CoA = a 1,2-diacyl-sn-glycero-3-phosphate + CoA</text>
        <dbReference type="Rhea" id="RHEA:19709"/>
        <dbReference type="ChEBI" id="CHEBI:57287"/>
        <dbReference type="ChEBI" id="CHEBI:57970"/>
        <dbReference type="ChEBI" id="CHEBI:58342"/>
        <dbReference type="ChEBI" id="CHEBI:58608"/>
        <dbReference type="EC" id="2.3.1.51"/>
    </reaction>
</comment>
<comment type="catalytic activity">
    <reaction evidence="2">
        <text>a 1-O-(1Z-alkenyl)-sn-glycero-3-phosphocholine + an acyl-CoA = a 1-O-(1Z-alkenyl)-2-acyl-sn-glycero-3-phosphocholine + CoA</text>
        <dbReference type="Rhea" id="RHEA:10344"/>
        <dbReference type="ChEBI" id="CHEBI:57287"/>
        <dbReference type="ChEBI" id="CHEBI:58342"/>
        <dbReference type="ChEBI" id="CHEBI:77286"/>
        <dbReference type="ChEBI" id="CHEBI:77287"/>
        <dbReference type="EC" id="2.3.1.25"/>
    </reaction>
</comment>
<comment type="catalytic activity">
    <reaction evidence="7">
        <text>1-hexadecanoyl-sn-glycero-3-phosphate + (9Z)-octadecenoyl-CoA = 1-hexadecanoyl-2-(9Z-octadecenoyl)-sn-glycero-3-phosphate + CoA</text>
        <dbReference type="Rhea" id="RHEA:33187"/>
        <dbReference type="ChEBI" id="CHEBI:57287"/>
        <dbReference type="ChEBI" id="CHEBI:57387"/>
        <dbReference type="ChEBI" id="CHEBI:57518"/>
        <dbReference type="ChEBI" id="CHEBI:64839"/>
    </reaction>
    <physiologicalReaction direction="left-to-right" evidence="13">
        <dbReference type="Rhea" id="RHEA:33188"/>
    </physiologicalReaction>
</comment>
<comment type="catalytic activity">
    <reaction evidence="7">
        <text>1-(9Z-octadecenoyl)-sn-glycero-3-phosphate + (9Z)-octadecenoyl-CoA = 1,2-di-(9Z-octadecenoyl)-sn-glycero-3-phosphate + CoA</text>
        <dbReference type="Rhea" id="RHEA:37131"/>
        <dbReference type="ChEBI" id="CHEBI:57287"/>
        <dbReference type="ChEBI" id="CHEBI:57387"/>
        <dbReference type="ChEBI" id="CHEBI:74544"/>
        <dbReference type="ChEBI" id="CHEBI:74546"/>
    </reaction>
    <physiologicalReaction direction="left-to-right" evidence="13">
        <dbReference type="Rhea" id="RHEA:37132"/>
    </physiologicalReaction>
</comment>
<comment type="catalytic activity">
    <reaction evidence="7">
        <text>1-(9Z-octadecenoyl)-sn-glycero-3-phosphate + hexadecanoyl-CoA = 1-(9Z)-octadecenoyl-2-hexadecanoyl-sn-glycero-3-phosphate + CoA</text>
        <dbReference type="Rhea" id="RHEA:37143"/>
        <dbReference type="ChEBI" id="CHEBI:57287"/>
        <dbReference type="ChEBI" id="CHEBI:57379"/>
        <dbReference type="ChEBI" id="CHEBI:74544"/>
        <dbReference type="ChEBI" id="CHEBI:74551"/>
    </reaction>
    <physiologicalReaction direction="left-to-right" evidence="13">
        <dbReference type="Rhea" id="RHEA:37144"/>
    </physiologicalReaction>
</comment>
<comment type="catalytic activity">
    <reaction evidence="7">
        <text>1-heptadecanoyl-sn-glycero-3-phosphate + (9Z)-octadecenoyl-CoA = 1-heptadecanoyl-2-(9Z)-octadecenoyl-sn-glycero-3-phosphate + CoA</text>
        <dbReference type="Rhea" id="RHEA:37151"/>
        <dbReference type="ChEBI" id="CHEBI:57287"/>
        <dbReference type="ChEBI" id="CHEBI:57387"/>
        <dbReference type="ChEBI" id="CHEBI:74554"/>
        <dbReference type="ChEBI" id="CHEBI:74556"/>
    </reaction>
    <physiologicalReaction direction="left-to-right" evidence="13">
        <dbReference type="Rhea" id="RHEA:37152"/>
    </physiologicalReaction>
</comment>
<comment type="catalytic activity">
    <reaction evidence="7">
        <text>1-octadecanoyl-sn-glycero-3-phosphate + (9Z)-octadecenoyl-CoA = 1-octadecanoyl-2-(9Z-octadecenoyl)-sn-glycero-3-phosphate + CoA</text>
        <dbReference type="Rhea" id="RHEA:37163"/>
        <dbReference type="ChEBI" id="CHEBI:57287"/>
        <dbReference type="ChEBI" id="CHEBI:57387"/>
        <dbReference type="ChEBI" id="CHEBI:74560"/>
        <dbReference type="ChEBI" id="CHEBI:74565"/>
    </reaction>
    <physiologicalReaction direction="left-to-right" evidence="13">
        <dbReference type="Rhea" id="RHEA:37164"/>
    </physiologicalReaction>
</comment>
<comment type="catalytic activity">
    <reaction evidence="7">
        <text>heptadecanoyl-CoA + 1-(9Z-octadecenoyl)-sn-glycero-3-phosphate = 1-(9Z)-octadecenoyl-2-heptadecanoyl-sn-glycero-3-phosphate + CoA</text>
        <dbReference type="Rhea" id="RHEA:37155"/>
        <dbReference type="ChEBI" id="CHEBI:57287"/>
        <dbReference type="ChEBI" id="CHEBI:74307"/>
        <dbReference type="ChEBI" id="CHEBI:74544"/>
        <dbReference type="ChEBI" id="CHEBI:74558"/>
    </reaction>
    <physiologicalReaction direction="left-to-right" evidence="13">
        <dbReference type="Rhea" id="RHEA:37156"/>
    </physiologicalReaction>
</comment>
<comment type="catalytic activity">
    <reaction evidence="7">
        <text>1-(9Z-octadecenoyl)-sn-glycero-3-phosphate + (9Z,12Z)-octadecadienoyl-CoA = 1-(9Z)-octadecenoyl-2-(9Z,12Z)-octadecadienoyl-sn-glycero-3-phosphate + CoA</text>
        <dbReference type="Rhea" id="RHEA:37159"/>
        <dbReference type="ChEBI" id="CHEBI:57287"/>
        <dbReference type="ChEBI" id="CHEBI:57383"/>
        <dbReference type="ChEBI" id="CHEBI:74544"/>
        <dbReference type="ChEBI" id="CHEBI:74563"/>
    </reaction>
    <physiologicalReaction direction="left-to-right" evidence="13">
        <dbReference type="Rhea" id="RHEA:37160"/>
    </physiologicalReaction>
</comment>
<comment type="catalytic activity">
    <reaction evidence="7">
        <text>1-(9Z-octadecenoyl)-sn-glycero-3-phosphate + tetradecanoyl-CoA = 1-(9Z)-octadecenoyl-2-tetradecanoyl-sn-glycero-3-phosphate + CoA</text>
        <dbReference type="Rhea" id="RHEA:37171"/>
        <dbReference type="ChEBI" id="CHEBI:57287"/>
        <dbReference type="ChEBI" id="CHEBI:57385"/>
        <dbReference type="ChEBI" id="CHEBI:74544"/>
        <dbReference type="ChEBI" id="CHEBI:74579"/>
    </reaction>
    <physiologicalReaction direction="left-to-right" evidence="13">
        <dbReference type="Rhea" id="RHEA:37172"/>
    </physiologicalReaction>
</comment>
<comment type="catalytic activity">
    <reaction evidence="7">
        <text>pentadecanoyl-CoA + 1-(9Z-octadecenoyl)-sn-glycero-3-phosphate = 1-(9Z)-octadecenoyl-2-pentadecanoyl-sn-glycero-3-phosphate + CoA</text>
        <dbReference type="Rhea" id="RHEA:37175"/>
        <dbReference type="ChEBI" id="CHEBI:57287"/>
        <dbReference type="ChEBI" id="CHEBI:74309"/>
        <dbReference type="ChEBI" id="CHEBI:74544"/>
        <dbReference type="ChEBI" id="CHEBI:74578"/>
    </reaction>
    <physiologicalReaction direction="left-to-right" evidence="13">
        <dbReference type="Rhea" id="RHEA:37176"/>
    </physiologicalReaction>
</comment>
<comment type="catalytic activity">
    <reaction evidence="7">
        <text>nonadecanoyl-CoA + 1-(9Z-octadecenoyl)-sn-glycero-3-phosphate = 1-(9Z)-octadecenoyl-2-nonadecanoyl-sn-glycero-3-phosphate + CoA</text>
        <dbReference type="Rhea" id="RHEA:37595"/>
        <dbReference type="ChEBI" id="CHEBI:57287"/>
        <dbReference type="ChEBI" id="CHEBI:74544"/>
        <dbReference type="ChEBI" id="CHEBI:75104"/>
        <dbReference type="ChEBI" id="CHEBI:75105"/>
    </reaction>
    <physiologicalReaction direction="left-to-right" evidence="13">
        <dbReference type="Rhea" id="RHEA:37596"/>
    </physiologicalReaction>
</comment>
<comment type="catalytic activity">
    <reaction evidence="8">
        <text>1-hexadecanoyl-sn-glycero-3-phosphocholine + (9Z)-octadecenoyl-CoA = 1-hexadecanoyl-2-(9Z-octadecenoyl)-sn-glycero-3-phosphocholine + CoA</text>
        <dbReference type="Rhea" id="RHEA:35991"/>
        <dbReference type="ChEBI" id="CHEBI:57287"/>
        <dbReference type="ChEBI" id="CHEBI:57387"/>
        <dbReference type="ChEBI" id="CHEBI:72998"/>
        <dbReference type="ChEBI" id="CHEBI:73001"/>
    </reaction>
    <physiologicalReaction direction="left-to-right" evidence="14">
        <dbReference type="Rhea" id="RHEA:35992"/>
    </physiologicalReaction>
</comment>
<comment type="catalytic activity">
    <reaction evidence="6">
        <text>1-O-hexadecyl-sn-glycero-3-phosphocholine + acetyl-CoA = 1-O-hexadecyl-2-acetyl-sn-glycero-3-phosphocholine + CoA</text>
        <dbReference type="Rhea" id="RHEA:37719"/>
        <dbReference type="ChEBI" id="CHEBI:44811"/>
        <dbReference type="ChEBI" id="CHEBI:57287"/>
        <dbReference type="ChEBI" id="CHEBI:57288"/>
        <dbReference type="ChEBI" id="CHEBI:64496"/>
    </reaction>
    <physiologicalReaction direction="left-to-right" evidence="12">
        <dbReference type="Rhea" id="RHEA:37720"/>
    </physiologicalReaction>
</comment>
<comment type="catalytic activity">
    <reaction evidence="2">
        <text>1-O-octadecyl-sn-glycero-3-phosphocholine + acetyl-CoA = 1-O-octadecyl-2-acetyl-sn-glycero-3-phosphocholine + CoA</text>
        <dbReference type="Rhea" id="RHEA:37699"/>
        <dbReference type="ChEBI" id="CHEBI:52450"/>
        <dbReference type="ChEBI" id="CHEBI:57287"/>
        <dbReference type="ChEBI" id="CHEBI:57288"/>
        <dbReference type="ChEBI" id="CHEBI:75216"/>
    </reaction>
    <physiologicalReaction direction="left-to-right" evidence="2">
        <dbReference type="Rhea" id="RHEA:37700"/>
    </physiologicalReaction>
</comment>
<comment type="catalytic activity">
    <reaction evidence="2">
        <text>1-hexadecanoyl-sn-glycero-3-phosphocholine + acetyl-CoA = 1-hexadecanoyl-2-acetyl-sn-glycero-3-phosphocholine + CoA</text>
        <dbReference type="Rhea" id="RHEA:37703"/>
        <dbReference type="ChEBI" id="CHEBI:57287"/>
        <dbReference type="ChEBI" id="CHEBI:57288"/>
        <dbReference type="ChEBI" id="CHEBI:72998"/>
        <dbReference type="ChEBI" id="CHEBI:75219"/>
    </reaction>
    <physiologicalReaction direction="left-to-right" evidence="2">
        <dbReference type="Rhea" id="RHEA:37704"/>
    </physiologicalReaction>
</comment>
<comment type="catalytic activity">
    <reaction evidence="2">
        <text>1-octadecanoyl-sn-glycero-3-phosphocholine + acetyl-CoA = 1-octadecanoyl-2-acetyl-sn-glycero-3-phosphocholine + CoA</text>
        <dbReference type="Rhea" id="RHEA:37707"/>
        <dbReference type="ChEBI" id="CHEBI:57287"/>
        <dbReference type="ChEBI" id="CHEBI:57288"/>
        <dbReference type="ChEBI" id="CHEBI:73858"/>
        <dbReference type="ChEBI" id="CHEBI:75220"/>
    </reaction>
    <physiologicalReaction direction="left-to-right" evidence="2">
        <dbReference type="Rhea" id="RHEA:37708"/>
    </physiologicalReaction>
</comment>
<comment type="catalytic activity">
    <reaction evidence="2">
        <text>a 1-O-(1Z-alkenyl)-sn-glycero-3-phosphocholine + acetyl-CoA = 1-O-(1Z)-alkenyl-2-acetyl-sn-glycero-3-phosphocholine + CoA</text>
        <dbReference type="Rhea" id="RHEA:37711"/>
        <dbReference type="ChEBI" id="CHEBI:57287"/>
        <dbReference type="ChEBI" id="CHEBI:57288"/>
        <dbReference type="ChEBI" id="CHEBI:77287"/>
        <dbReference type="ChEBI" id="CHEBI:78566"/>
    </reaction>
    <physiologicalReaction direction="left-to-right" evidence="2">
        <dbReference type="Rhea" id="RHEA:37712"/>
    </physiologicalReaction>
</comment>
<comment type="catalytic activity">
    <reaction evidence="2">
        <text>1-O-octadecyl-sn-glycero-3-phosphocholine + (5Z,8Z,11Z,14Z)-eicosatetraenoyl-CoA = 1-O-octadecyl-2-(5Z,8Z,11Z,14Z)-eicosatetraenoyl-sn-glycero-3-phosphocholine + CoA</text>
        <dbReference type="Rhea" id="RHEA:37747"/>
        <dbReference type="ChEBI" id="CHEBI:57287"/>
        <dbReference type="ChEBI" id="CHEBI:57368"/>
        <dbReference type="ChEBI" id="CHEBI:75216"/>
        <dbReference type="ChEBI" id="CHEBI:75245"/>
    </reaction>
    <physiologicalReaction direction="left-to-right" evidence="2">
        <dbReference type="Rhea" id="RHEA:37748"/>
    </physiologicalReaction>
</comment>
<comment type="pathway">
    <text>Lipid metabolism; phospholipid metabolism.</text>
</comment>
<comment type="interaction">
    <interactant intactId="EBI-4280011">
        <id>Q7L5N7</id>
    </interactant>
    <interactant intactId="EBI-3915253">
        <id>Q15125</id>
        <label>EBP</label>
    </interactant>
    <organismsDiffer>false</organismsDiffer>
    <experiments>3</experiments>
</comment>
<comment type="interaction">
    <interactant intactId="EBI-4280011">
        <id>Q7L5N7</id>
    </interactant>
    <interactant intactId="EBI-781551">
        <id>Q9Y282</id>
        <label>ERGIC3</label>
    </interactant>
    <organismsDiffer>false</organismsDiffer>
    <experiments>3</experiments>
</comment>
<comment type="interaction">
    <interactant intactId="EBI-4280011">
        <id>Q7L5N7</id>
    </interactant>
    <interactant intactId="EBI-18053395">
        <id>Q7Z5P4</id>
        <label>HSD17B13</label>
    </interactant>
    <organismsDiffer>false</organismsDiffer>
    <experiments>3</experiments>
</comment>
<comment type="interaction">
    <interactant intactId="EBI-4280011">
        <id>Q7L5N7</id>
    </interactant>
    <interactant intactId="EBI-12017638">
        <id>P48051</id>
        <label>KCNJ6</label>
    </interactant>
    <organismsDiffer>false</organismsDiffer>
    <experiments>3</experiments>
</comment>
<comment type="interaction">
    <interactant intactId="EBI-4280011">
        <id>Q7L5N7</id>
    </interactant>
    <interactant intactId="EBI-373355">
        <id>Q5SR56</id>
        <label>MFSD14B</label>
    </interactant>
    <organismsDiffer>false</organismsDiffer>
    <experiments>3</experiments>
</comment>
<comment type="interaction">
    <interactant intactId="EBI-4280011">
        <id>Q7L5N7</id>
    </interactant>
    <interactant intactId="EBI-10192441">
        <id>Q86VR2</id>
        <label>RETREG3</label>
    </interactant>
    <organismsDiffer>false</organismsDiffer>
    <experiments>3</experiments>
</comment>
<comment type="interaction">
    <interactant intactId="EBI-4280011">
        <id>Q7L5N7</id>
    </interactant>
    <interactant intactId="EBI-9916444">
        <id>Q8TEB9</id>
        <label>RHBDD1</label>
    </interactant>
    <organismsDiffer>false</organismsDiffer>
    <experiments>3</experiments>
</comment>
<comment type="subcellular location">
    <subcellularLocation>
        <location evidence="7 8">Endoplasmic reticulum membrane</location>
        <topology evidence="8">Single-pass type II membrane protein</topology>
    </subcellularLocation>
    <subcellularLocation>
        <location evidence="2">Golgi apparatus membrane</location>
        <topology evidence="14">Single-pass type II membrane protein</topology>
    </subcellularLocation>
    <subcellularLocation>
        <location evidence="2">Cell membrane</location>
        <topology evidence="14">Single-pass type II membrane protein</topology>
    </subcellularLocation>
    <subcellularLocation>
        <location evidence="8">Lipid droplet</location>
    </subcellularLocation>
</comment>
<comment type="alternative products">
    <event type="alternative splicing"/>
    <isoform>
        <id>Q7L5N7-1</id>
        <name>1</name>
        <sequence type="displayed"/>
    </isoform>
    <isoform>
        <id>Q7L5N7-2</id>
        <name>2</name>
        <sequence type="described" ref="VSP_019912"/>
    </isoform>
</comment>
<comment type="domain">
    <text evidence="1">The HXXXXD motif is essential for acyltransferase activity.</text>
</comment>
<comment type="similarity">
    <text evidence="11">Belongs to the 1-acyl-sn-glycerol-3-phosphate acyltransferase family.</text>
</comment>
<comment type="sequence caution" evidence="11">
    <conflict type="frameshift">
        <sequence resource="EMBL-CDS" id="BAA91199"/>
    </conflict>
</comment>
<comment type="sequence caution" evidence="11">
    <conflict type="frameshift">
        <sequence resource="EMBL-CDS" id="CAE46034"/>
    </conflict>
</comment>
<name>PCAT2_HUMAN</name>
<protein>
    <recommendedName>
        <fullName>Lysophosphatidylcholine acyltransferase 2</fullName>
        <shortName>LPC acyltransferase 2</shortName>
        <shortName>LPCAT-2</shortName>
        <shortName>LysoPC acyltransferase 2</shortName>
        <ecNumber evidence="8">2.3.1.23</ecNumber>
    </recommendedName>
    <alternativeName>
        <fullName>1-acylglycerol-3-phosphate O-acyltransferase 11</fullName>
        <shortName>1-AGP acyltransferase 11</shortName>
        <shortName>1-AGPAT 11</shortName>
        <ecNumber evidence="7">2.3.1.51</ecNumber>
    </alternativeName>
    <alternativeName>
        <fullName>1-acylglycerophosphocholine O-acyltransferase</fullName>
    </alternativeName>
    <alternativeName>
        <fullName>1-alkenylglycerophosphocholine O-acyltransferase</fullName>
        <ecNumber evidence="2">2.3.1.25</ecNumber>
    </alternativeName>
    <alternativeName>
        <fullName>1-alkylglycerophosphocholine O-acetyltransferase</fullName>
        <ecNumber evidence="6">2.3.1.67</ecNumber>
    </alternativeName>
    <alternativeName>
        <fullName>Acetyl-CoA:lyso-platelet-activating factor acetyltransferase</fullName>
        <shortName>Acetyl-CoA:lyso-PAF acetyltransferase</shortName>
        <shortName>Lyso-PAF acetyltransferase</shortName>
        <shortName>LysoPAFAT</shortName>
    </alternativeName>
    <alternativeName>
        <fullName>Acyltransferase-like 1</fullName>
    </alternativeName>
    <alternativeName>
        <fullName>Lysophosphatidic acid acyltransferase alpha</fullName>
        <shortName>LPAAT-alpha</shortName>
    </alternativeName>
</protein>
<evidence type="ECO:0000250" key="1">
    <source>
        <dbReference type="UniProtKB" id="Q3TFD2"/>
    </source>
</evidence>
<evidence type="ECO:0000250" key="2">
    <source>
        <dbReference type="UniProtKB" id="Q8BYI6"/>
    </source>
</evidence>
<evidence type="ECO:0000255" key="3"/>
<evidence type="ECO:0000255" key="4">
    <source>
        <dbReference type="PROSITE-ProRule" id="PRU00448"/>
    </source>
</evidence>
<evidence type="ECO:0000256" key="5">
    <source>
        <dbReference type="SAM" id="MobiDB-lite"/>
    </source>
</evidence>
<evidence type="ECO:0000269" key="6">
    <source>
    </source>
</evidence>
<evidence type="ECO:0000269" key="7">
    <source>
    </source>
</evidence>
<evidence type="ECO:0000269" key="8">
    <source>
    </source>
</evidence>
<evidence type="ECO:0000269" key="9">
    <source>
    </source>
</evidence>
<evidence type="ECO:0000303" key="10">
    <source>
    </source>
</evidence>
<evidence type="ECO:0000305" key="11"/>
<evidence type="ECO:0000305" key="12">
    <source>
    </source>
</evidence>
<evidence type="ECO:0000305" key="13">
    <source>
    </source>
</evidence>
<evidence type="ECO:0000305" key="14">
    <source>
    </source>
</evidence>
<proteinExistence type="evidence at protein level"/>
<sequence length="544" mass="60208">MSRCAQAAEVAATVPGAGVGNVGLRPPMVPRQASFFPPPVPNPFVQQTQIGSARRVQIVLLGIILLPIRVLLVALILLLAWPFAAISTVCCPEKLTHPITGWRRKITQTALKFLGRAMFFSMGFIVAVKGKIASPLEAPVFVAAPHSTFFDGIACVVAGLPSMVSRNENAQVPLIGRLLRAVQPVLVSRVDPDSRKNTINEIIKRTTSGGEWPQILVFPEGTCTNRSCLITFKPGAFIPGVPVQPVLLRYPNKLDTVTWTWQGYTFIQLCMLTFCQLFTKVEVEFMPVQVPNDEEKNDPVLFANKVRNLMAEALGIPVTDHTYEDCRLMISAGQLTLPMEAGLVEFTKISRKLKLDWDGVRKHLDEYASIASSSKGGRIGIEEFAKYLKLPVSDVLRQLFALFDRNHDGSIDFREYVIGLAVLCNPSNTEEIIQVAFKLFDVDEDGYITEEEFSTILQASLGVPDLDVSGLFKEIAQGDSISYEEFKSFALKHPEYAKIFTTYLDLQTCHVFSLPKEVQTTPSTASNKVSPEKHEESTSDKKDD</sequence>
<dbReference type="EC" id="2.3.1.23" evidence="8"/>
<dbReference type="EC" id="2.3.1.51" evidence="7"/>
<dbReference type="EC" id="2.3.1.25" evidence="2"/>
<dbReference type="EC" id="2.3.1.67" evidence="6"/>
<dbReference type="EMBL" id="AB244718">
    <property type="protein sequence ID" value="BAF47696.1"/>
    <property type="molecule type" value="mRNA"/>
</dbReference>
<dbReference type="EMBL" id="AK000488">
    <property type="protein sequence ID" value="BAA91199.1"/>
    <property type="status" value="ALT_FRAME"/>
    <property type="molecule type" value="mRNA"/>
</dbReference>
<dbReference type="EMBL" id="BX641069">
    <property type="protein sequence ID" value="CAE46034.1"/>
    <property type="status" value="ALT_FRAME"/>
    <property type="molecule type" value="mRNA"/>
</dbReference>
<dbReference type="EMBL" id="BC002472">
    <property type="protein sequence ID" value="AAH02472.2"/>
    <property type="molecule type" value="mRNA"/>
</dbReference>
<dbReference type="CCDS" id="CCDS10753.1">
    <molecule id="Q7L5N7-1"/>
</dbReference>
<dbReference type="RefSeq" id="NP_060309.2">
    <molecule id="Q7L5N7-1"/>
    <property type="nucleotide sequence ID" value="NM_017839.4"/>
</dbReference>
<dbReference type="RefSeq" id="XP_011521471.1">
    <molecule id="Q7L5N7-2"/>
    <property type="nucleotide sequence ID" value="XM_011523169.4"/>
</dbReference>
<dbReference type="RefSeq" id="XP_054236563.1">
    <molecule id="Q7L5N7-2"/>
    <property type="nucleotide sequence ID" value="XM_054380588.1"/>
</dbReference>
<dbReference type="SMR" id="Q7L5N7"/>
<dbReference type="BioGRID" id="120286">
    <property type="interactions" value="120"/>
</dbReference>
<dbReference type="FunCoup" id="Q7L5N7">
    <property type="interactions" value="1005"/>
</dbReference>
<dbReference type="IntAct" id="Q7L5N7">
    <property type="interactions" value="60"/>
</dbReference>
<dbReference type="MINT" id="Q7L5N7"/>
<dbReference type="STRING" id="9606.ENSP00000262134"/>
<dbReference type="DrugBank" id="DB15584">
    <property type="generic name" value="Luteolin"/>
</dbReference>
<dbReference type="DrugBank" id="DB04216">
    <property type="generic name" value="Quercetin"/>
</dbReference>
<dbReference type="SwissLipids" id="SLP:000000279"/>
<dbReference type="GlyGen" id="Q7L5N7">
    <property type="glycosylation" value="1 site, 1 O-linked glycan (1 site)"/>
</dbReference>
<dbReference type="iPTMnet" id="Q7L5N7"/>
<dbReference type="PhosphoSitePlus" id="Q7L5N7"/>
<dbReference type="SwissPalm" id="Q7L5N7"/>
<dbReference type="BioMuta" id="LPCAT2"/>
<dbReference type="DMDM" id="74738601"/>
<dbReference type="jPOST" id="Q7L5N7"/>
<dbReference type="MassIVE" id="Q7L5N7"/>
<dbReference type="PaxDb" id="9606-ENSP00000262134"/>
<dbReference type="PeptideAtlas" id="Q7L5N7"/>
<dbReference type="ProteomicsDB" id="68812">
    <molecule id="Q7L5N7-1"/>
</dbReference>
<dbReference type="ProteomicsDB" id="68813">
    <molecule id="Q7L5N7-2"/>
</dbReference>
<dbReference type="Pumba" id="Q7L5N7"/>
<dbReference type="Antibodypedia" id="2010">
    <property type="antibodies" value="191 antibodies from 28 providers"/>
</dbReference>
<dbReference type="DNASU" id="54947"/>
<dbReference type="Ensembl" id="ENST00000262134.10">
    <molecule id="Q7L5N7-1"/>
    <property type="protein sequence ID" value="ENSP00000262134.5"/>
    <property type="gene ID" value="ENSG00000087253.13"/>
</dbReference>
<dbReference type="GeneID" id="54947"/>
<dbReference type="KEGG" id="hsa:54947"/>
<dbReference type="MANE-Select" id="ENST00000262134.10">
    <property type="protein sequence ID" value="ENSP00000262134.5"/>
    <property type="RefSeq nucleotide sequence ID" value="NM_017839.5"/>
    <property type="RefSeq protein sequence ID" value="NP_060309.2"/>
</dbReference>
<dbReference type="UCSC" id="uc002eie.5">
    <molecule id="Q7L5N7-1"/>
    <property type="organism name" value="human"/>
</dbReference>
<dbReference type="AGR" id="HGNC:26032"/>
<dbReference type="CTD" id="54947"/>
<dbReference type="DisGeNET" id="54947"/>
<dbReference type="GeneCards" id="LPCAT2"/>
<dbReference type="HGNC" id="HGNC:26032">
    <property type="gene designation" value="LPCAT2"/>
</dbReference>
<dbReference type="HPA" id="ENSG00000087253">
    <property type="expression patterns" value="Tissue enhanced (bone marrow, thyroid gland)"/>
</dbReference>
<dbReference type="MalaCards" id="LPCAT2"/>
<dbReference type="MIM" id="612040">
    <property type="type" value="gene"/>
</dbReference>
<dbReference type="neXtProt" id="NX_Q7L5N7"/>
<dbReference type="OpenTargets" id="ENSG00000087253"/>
<dbReference type="PharmGKB" id="PA162394265"/>
<dbReference type="VEuPathDB" id="HostDB:ENSG00000087253"/>
<dbReference type="eggNOG" id="KOG4666">
    <property type="taxonomic scope" value="Eukaryota"/>
</dbReference>
<dbReference type="GeneTree" id="ENSGT01030000234574"/>
<dbReference type="HOGENOM" id="CLU_025017_0_0_1"/>
<dbReference type="InParanoid" id="Q7L5N7"/>
<dbReference type="OMA" id="FLYHKSE"/>
<dbReference type="OrthoDB" id="272512at2759"/>
<dbReference type="PAN-GO" id="Q7L5N7">
    <property type="GO annotations" value="0 GO annotations based on evolutionary models"/>
</dbReference>
<dbReference type="PhylomeDB" id="Q7L5N7"/>
<dbReference type="TreeFam" id="TF323244"/>
<dbReference type="BRENDA" id="2.3.1.23">
    <property type="organism ID" value="2681"/>
</dbReference>
<dbReference type="BRENDA" id="2.3.1.51">
    <property type="organism ID" value="2681"/>
</dbReference>
<dbReference type="BRENDA" id="2.3.1.67">
    <property type="organism ID" value="2681"/>
</dbReference>
<dbReference type="PathwayCommons" id="Q7L5N7"/>
<dbReference type="Reactome" id="R-HSA-1482788">
    <property type="pathway name" value="Acyl chain remodelling of PC"/>
</dbReference>
<dbReference type="SignaLink" id="Q7L5N7"/>
<dbReference type="SIGNOR" id="Q7L5N7"/>
<dbReference type="UniPathway" id="UPA00085"/>
<dbReference type="BioGRID-ORCS" id="54947">
    <property type="hits" value="8 hits in 1154 CRISPR screens"/>
</dbReference>
<dbReference type="ChiTaRS" id="LPCAT2">
    <property type="organism name" value="human"/>
</dbReference>
<dbReference type="GenomeRNAi" id="54947"/>
<dbReference type="Pharos" id="Q7L5N7">
    <property type="development level" value="Tbio"/>
</dbReference>
<dbReference type="PRO" id="PR:Q7L5N7"/>
<dbReference type="Proteomes" id="UP000005640">
    <property type="component" value="Chromosome 16"/>
</dbReference>
<dbReference type="RNAct" id="Q7L5N7">
    <property type="molecule type" value="protein"/>
</dbReference>
<dbReference type="Bgee" id="ENSG00000087253">
    <property type="expression patterns" value="Expressed in caput epididymis and 167 other cell types or tissues"/>
</dbReference>
<dbReference type="ExpressionAtlas" id="Q7L5N7">
    <property type="expression patterns" value="baseline and differential"/>
</dbReference>
<dbReference type="GO" id="GO:0005783">
    <property type="term" value="C:endoplasmic reticulum"/>
    <property type="evidence" value="ECO:0000314"/>
    <property type="project" value="HPA"/>
</dbReference>
<dbReference type="GO" id="GO:0005789">
    <property type="term" value="C:endoplasmic reticulum membrane"/>
    <property type="evidence" value="ECO:0000314"/>
    <property type="project" value="UniProtKB"/>
</dbReference>
<dbReference type="GO" id="GO:0000139">
    <property type="term" value="C:Golgi membrane"/>
    <property type="evidence" value="ECO:0007669"/>
    <property type="project" value="UniProtKB-SubCell"/>
</dbReference>
<dbReference type="GO" id="GO:0005795">
    <property type="term" value="C:Golgi stack"/>
    <property type="evidence" value="ECO:0000250"/>
    <property type="project" value="UniProtKB"/>
</dbReference>
<dbReference type="GO" id="GO:0005811">
    <property type="term" value="C:lipid droplet"/>
    <property type="evidence" value="ECO:0000314"/>
    <property type="project" value="HPA"/>
</dbReference>
<dbReference type="GO" id="GO:0005886">
    <property type="term" value="C:plasma membrane"/>
    <property type="evidence" value="ECO:0007669"/>
    <property type="project" value="UniProtKB-SubCell"/>
</dbReference>
<dbReference type="GO" id="GO:0003841">
    <property type="term" value="F:1-acylglycerol-3-phosphate O-acyltransferase activity"/>
    <property type="evidence" value="ECO:0000314"/>
    <property type="project" value="UniProtKB"/>
</dbReference>
<dbReference type="GO" id="GO:0047184">
    <property type="term" value="F:1-acylglycerophosphocholine O-acyltransferase activity"/>
    <property type="evidence" value="ECO:0000314"/>
    <property type="project" value="UniProtKB"/>
</dbReference>
<dbReference type="GO" id="GO:0047192">
    <property type="term" value="F:1-alkylglycerophosphocholine O-acetyltransferase activity"/>
    <property type="evidence" value="ECO:0000250"/>
    <property type="project" value="UniProtKB"/>
</dbReference>
<dbReference type="GO" id="GO:0047144">
    <property type="term" value="F:2-acylglycerol-3-phosphate O-acyltransferase activity"/>
    <property type="evidence" value="ECO:0000304"/>
    <property type="project" value="Reactome"/>
</dbReference>
<dbReference type="GO" id="GO:0005509">
    <property type="term" value="F:calcium ion binding"/>
    <property type="evidence" value="ECO:0007669"/>
    <property type="project" value="InterPro"/>
</dbReference>
<dbReference type="GO" id="GO:0042171">
    <property type="term" value="F:lysophosphatidic acid acyltransferase activity"/>
    <property type="evidence" value="ECO:0000318"/>
    <property type="project" value="GO_Central"/>
</dbReference>
<dbReference type="GO" id="GO:0047159">
    <property type="term" value="F:plasmalogen synthase activity"/>
    <property type="evidence" value="ECO:0007669"/>
    <property type="project" value="UniProtKB-EC"/>
</dbReference>
<dbReference type="GO" id="GO:0061024">
    <property type="term" value="P:membrane organization"/>
    <property type="evidence" value="ECO:0000250"/>
    <property type="project" value="UniProtKB"/>
</dbReference>
<dbReference type="GO" id="GO:0036151">
    <property type="term" value="P:phosphatidylcholine acyl-chain remodeling"/>
    <property type="evidence" value="ECO:0000314"/>
    <property type="project" value="UniProtKB"/>
</dbReference>
<dbReference type="GO" id="GO:0006663">
    <property type="term" value="P:platelet activating factor biosynthetic process"/>
    <property type="evidence" value="ECO:0000250"/>
    <property type="project" value="UniProtKB"/>
</dbReference>
<dbReference type="CDD" id="cd00051">
    <property type="entry name" value="EFh"/>
    <property type="match status" value="2"/>
</dbReference>
<dbReference type="CDD" id="cd07991">
    <property type="entry name" value="LPLAT_LPCAT1-like"/>
    <property type="match status" value="1"/>
</dbReference>
<dbReference type="FunFam" id="1.10.238.10:FF:000160">
    <property type="entry name" value="Lysophosphatidylcholine acyltransferase 2"/>
    <property type="match status" value="1"/>
</dbReference>
<dbReference type="Gene3D" id="1.10.238.10">
    <property type="entry name" value="EF-hand"/>
    <property type="match status" value="1"/>
</dbReference>
<dbReference type="InterPro" id="IPR011992">
    <property type="entry name" value="EF-hand-dom_pair"/>
</dbReference>
<dbReference type="InterPro" id="IPR018247">
    <property type="entry name" value="EF_Hand_1_Ca_BS"/>
</dbReference>
<dbReference type="InterPro" id="IPR002048">
    <property type="entry name" value="EF_hand_dom"/>
</dbReference>
<dbReference type="InterPro" id="IPR045252">
    <property type="entry name" value="LPCAT1-like"/>
</dbReference>
<dbReference type="InterPro" id="IPR002123">
    <property type="entry name" value="Plipid/glycerol_acylTrfase"/>
</dbReference>
<dbReference type="PANTHER" id="PTHR23063:SF21">
    <property type="entry name" value="LYSOPHOSPHATIDYLCHOLINE ACYLTRANSFERASE 2"/>
    <property type="match status" value="1"/>
</dbReference>
<dbReference type="PANTHER" id="PTHR23063">
    <property type="entry name" value="PHOSPHOLIPID ACYLTRANSFERASE"/>
    <property type="match status" value="1"/>
</dbReference>
<dbReference type="Pfam" id="PF01553">
    <property type="entry name" value="Acyltransferase"/>
    <property type="match status" value="1"/>
</dbReference>
<dbReference type="Pfam" id="PF13202">
    <property type="entry name" value="EF-hand_5"/>
    <property type="match status" value="1"/>
</dbReference>
<dbReference type="Pfam" id="PF13499">
    <property type="entry name" value="EF-hand_7"/>
    <property type="match status" value="1"/>
</dbReference>
<dbReference type="PRINTS" id="PR00450">
    <property type="entry name" value="RECOVERIN"/>
</dbReference>
<dbReference type="SMART" id="SM00054">
    <property type="entry name" value="EFh"/>
    <property type="match status" value="2"/>
</dbReference>
<dbReference type="SMART" id="SM00563">
    <property type="entry name" value="PlsC"/>
    <property type="match status" value="1"/>
</dbReference>
<dbReference type="SUPFAM" id="SSF47473">
    <property type="entry name" value="EF-hand"/>
    <property type="match status" value="1"/>
</dbReference>
<dbReference type="SUPFAM" id="SSF69593">
    <property type="entry name" value="Glycerol-3-phosphate (1)-acyltransferase"/>
    <property type="match status" value="1"/>
</dbReference>
<dbReference type="PROSITE" id="PS00018">
    <property type="entry name" value="EF_HAND_1"/>
    <property type="match status" value="2"/>
</dbReference>
<dbReference type="PROSITE" id="PS50222">
    <property type="entry name" value="EF_HAND_2"/>
    <property type="match status" value="2"/>
</dbReference>
<feature type="chain" id="PRO_0000247058" description="Lysophosphatidylcholine acyltransferase 2">
    <location>
        <begin position="1"/>
        <end position="544"/>
    </location>
</feature>
<feature type="topological domain" description="Cytoplasmic" evidence="3">
    <location>
        <begin position="1"/>
        <end position="57"/>
    </location>
</feature>
<feature type="transmembrane region" description="Helical; Signal-anchor for type II membrane protein" evidence="3">
    <location>
        <begin position="58"/>
        <end position="78"/>
    </location>
</feature>
<feature type="topological domain" description="Lumenal" evidence="3">
    <location>
        <begin position="79"/>
        <end position="544"/>
    </location>
</feature>
<feature type="domain" description="EF-hand 1" evidence="4">
    <location>
        <begin position="391"/>
        <end position="426"/>
    </location>
</feature>
<feature type="domain" description="EF-hand 2" evidence="4">
    <location>
        <begin position="428"/>
        <end position="463"/>
    </location>
</feature>
<feature type="region of interest" description="Disordered" evidence="5">
    <location>
        <begin position="518"/>
        <end position="544"/>
    </location>
</feature>
<feature type="short sequence motif" description="HXXXXD motif" evidence="1">
    <location>
        <begin position="146"/>
        <end position="151"/>
    </location>
</feature>
<feature type="short sequence motif" description="EGTC motif">
    <location>
        <begin position="220"/>
        <end position="223"/>
    </location>
</feature>
<feature type="compositionally biased region" description="Polar residues" evidence="5">
    <location>
        <begin position="518"/>
        <end position="529"/>
    </location>
</feature>
<feature type="compositionally biased region" description="Basic and acidic residues" evidence="5">
    <location>
        <begin position="530"/>
        <end position="544"/>
    </location>
</feature>
<feature type="binding site" evidence="4">
    <location>
        <position position="404"/>
    </location>
    <ligand>
        <name>Ca(2+)</name>
        <dbReference type="ChEBI" id="CHEBI:29108"/>
        <label>1</label>
    </ligand>
</feature>
<feature type="binding site" evidence="4">
    <location>
        <position position="406"/>
    </location>
    <ligand>
        <name>Ca(2+)</name>
        <dbReference type="ChEBI" id="CHEBI:29108"/>
        <label>1</label>
    </ligand>
</feature>
<feature type="binding site" evidence="4">
    <location>
        <position position="408"/>
    </location>
    <ligand>
        <name>Ca(2+)</name>
        <dbReference type="ChEBI" id="CHEBI:29108"/>
        <label>1</label>
    </ligand>
</feature>
<feature type="binding site" evidence="4">
    <location>
        <position position="410"/>
    </location>
    <ligand>
        <name>Ca(2+)</name>
        <dbReference type="ChEBI" id="CHEBI:29108"/>
        <label>1</label>
    </ligand>
</feature>
<feature type="binding site" evidence="4">
    <location>
        <position position="415"/>
    </location>
    <ligand>
        <name>Ca(2+)</name>
        <dbReference type="ChEBI" id="CHEBI:29108"/>
        <label>1</label>
    </ligand>
</feature>
<feature type="binding site" evidence="4">
    <location>
        <position position="441"/>
    </location>
    <ligand>
        <name>Ca(2+)</name>
        <dbReference type="ChEBI" id="CHEBI:29108"/>
        <label>2</label>
    </ligand>
</feature>
<feature type="binding site" evidence="4">
    <location>
        <position position="443"/>
    </location>
    <ligand>
        <name>Ca(2+)</name>
        <dbReference type="ChEBI" id="CHEBI:29108"/>
        <label>2</label>
    </ligand>
</feature>
<feature type="binding site" evidence="4">
    <location>
        <position position="445"/>
    </location>
    <ligand>
        <name>Ca(2+)</name>
        <dbReference type="ChEBI" id="CHEBI:29108"/>
        <label>2</label>
    </ligand>
</feature>
<feature type="binding site" evidence="4">
    <location>
        <position position="447"/>
    </location>
    <ligand>
        <name>Ca(2+)</name>
        <dbReference type="ChEBI" id="CHEBI:29108"/>
        <label>2</label>
    </ligand>
</feature>
<feature type="binding site" evidence="4">
    <location>
        <position position="452"/>
    </location>
    <ligand>
        <name>Ca(2+)</name>
        <dbReference type="ChEBI" id="CHEBI:29108"/>
        <label>2</label>
    </ligand>
</feature>
<feature type="splice variant" id="VSP_019912" description="In isoform 2." evidence="10">
    <location>
        <begin position="1"/>
        <end position="270"/>
    </location>
</feature>
<feature type="sequence variant" id="VAR_027058" description="In dbSNP:rs837550.">
    <original>M</original>
    <variation>I</variation>
    <location>
        <position position="163"/>
    </location>
</feature>